<name>RS12_SHELP</name>
<protein>
    <recommendedName>
        <fullName evidence="2">Small ribosomal subunit protein uS12</fullName>
    </recommendedName>
    <alternativeName>
        <fullName evidence="3">30S ribosomal protein S12</fullName>
    </alternativeName>
</protein>
<sequence length="124" mass="13662">MATVNQLVRKPRSPKVIKTNVPALNACPQKRGVCTRVYTTTPKKPNSALRKVARVRLTNGFEVTSYIGGEGHNLQEHSVILIRGGRVKDLPGVRYHTVRGALDCAGVSERRQGRSKYGAKRPKS</sequence>
<reference key="1">
    <citation type="submission" date="2007-03" db="EMBL/GenBank/DDBJ databases">
        <title>Complete sequence of Shewanella loihica PV-4.</title>
        <authorList>
            <consortium name="US DOE Joint Genome Institute"/>
            <person name="Copeland A."/>
            <person name="Lucas S."/>
            <person name="Lapidus A."/>
            <person name="Barry K."/>
            <person name="Detter J.C."/>
            <person name="Glavina del Rio T."/>
            <person name="Hammon N."/>
            <person name="Israni S."/>
            <person name="Dalin E."/>
            <person name="Tice H."/>
            <person name="Pitluck S."/>
            <person name="Chain P."/>
            <person name="Malfatti S."/>
            <person name="Shin M."/>
            <person name="Vergez L."/>
            <person name="Schmutz J."/>
            <person name="Larimer F."/>
            <person name="Land M."/>
            <person name="Hauser L."/>
            <person name="Kyrpides N."/>
            <person name="Mikhailova N."/>
            <person name="Romine M.F."/>
            <person name="Serres G."/>
            <person name="Fredrickson J."/>
            <person name="Tiedje J."/>
            <person name="Richardson P."/>
        </authorList>
    </citation>
    <scope>NUCLEOTIDE SEQUENCE [LARGE SCALE GENOMIC DNA]</scope>
    <source>
        <strain>ATCC BAA-1088 / PV-4</strain>
    </source>
</reference>
<accession>A3Q977</accession>
<gene>
    <name evidence="2" type="primary">rpsL</name>
    <name type="ordered locus">Shew_0153</name>
</gene>
<feature type="chain" id="PRO_0000296028" description="Small ribosomal subunit protein uS12">
    <location>
        <begin position="1"/>
        <end position="124"/>
    </location>
</feature>
<feature type="modified residue" description="3-methylthioaspartic acid" evidence="1">
    <location>
        <position position="89"/>
    </location>
</feature>
<dbReference type="EMBL" id="CP000606">
    <property type="protein sequence ID" value="ABO22025.1"/>
    <property type="molecule type" value="Genomic_DNA"/>
</dbReference>
<dbReference type="RefSeq" id="WP_011863962.1">
    <property type="nucleotide sequence ID" value="NC_009092.1"/>
</dbReference>
<dbReference type="SMR" id="A3Q977"/>
<dbReference type="STRING" id="323850.Shew_0153"/>
<dbReference type="KEGG" id="slo:Shew_0153"/>
<dbReference type="eggNOG" id="COG0048">
    <property type="taxonomic scope" value="Bacteria"/>
</dbReference>
<dbReference type="HOGENOM" id="CLU_104295_1_2_6"/>
<dbReference type="OrthoDB" id="9802366at2"/>
<dbReference type="Proteomes" id="UP000001558">
    <property type="component" value="Chromosome"/>
</dbReference>
<dbReference type="GO" id="GO:0015935">
    <property type="term" value="C:small ribosomal subunit"/>
    <property type="evidence" value="ECO:0007669"/>
    <property type="project" value="InterPro"/>
</dbReference>
<dbReference type="GO" id="GO:0019843">
    <property type="term" value="F:rRNA binding"/>
    <property type="evidence" value="ECO:0007669"/>
    <property type="project" value="UniProtKB-UniRule"/>
</dbReference>
<dbReference type="GO" id="GO:0003735">
    <property type="term" value="F:structural constituent of ribosome"/>
    <property type="evidence" value="ECO:0007669"/>
    <property type="project" value="InterPro"/>
</dbReference>
<dbReference type="GO" id="GO:0000049">
    <property type="term" value="F:tRNA binding"/>
    <property type="evidence" value="ECO:0007669"/>
    <property type="project" value="UniProtKB-UniRule"/>
</dbReference>
<dbReference type="GO" id="GO:0006412">
    <property type="term" value="P:translation"/>
    <property type="evidence" value="ECO:0007669"/>
    <property type="project" value="UniProtKB-UniRule"/>
</dbReference>
<dbReference type="CDD" id="cd03368">
    <property type="entry name" value="Ribosomal_S12"/>
    <property type="match status" value="1"/>
</dbReference>
<dbReference type="FunFam" id="2.40.50.140:FF:000001">
    <property type="entry name" value="30S ribosomal protein S12"/>
    <property type="match status" value="1"/>
</dbReference>
<dbReference type="Gene3D" id="2.40.50.140">
    <property type="entry name" value="Nucleic acid-binding proteins"/>
    <property type="match status" value="1"/>
</dbReference>
<dbReference type="HAMAP" id="MF_00403_B">
    <property type="entry name" value="Ribosomal_uS12_B"/>
    <property type="match status" value="1"/>
</dbReference>
<dbReference type="InterPro" id="IPR012340">
    <property type="entry name" value="NA-bd_OB-fold"/>
</dbReference>
<dbReference type="InterPro" id="IPR006032">
    <property type="entry name" value="Ribosomal_uS12"/>
</dbReference>
<dbReference type="InterPro" id="IPR005679">
    <property type="entry name" value="Ribosomal_uS12_bac"/>
</dbReference>
<dbReference type="NCBIfam" id="TIGR00981">
    <property type="entry name" value="rpsL_bact"/>
    <property type="match status" value="1"/>
</dbReference>
<dbReference type="PANTHER" id="PTHR11652">
    <property type="entry name" value="30S RIBOSOMAL PROTEIN S12 FAMILY MEMBER"/>
    <property type="match status" value="1"/>
</dbReference>
<dbReference type="Pfam" id="PF00164">
    <property type="entry name" value="Ribosom_S12_S23"/>
    <property type="match status" value="1"/>
</dbReference>
<dbReference type="PIRSF" id="PIRSF002133">
    <property type="entry name" value="Ribosomal_S12/S23"/>
    <property type="match status" value="1"/>
</dbReference>
<dbReference type="PRINTS" id="PR01034">
    <property type="entry name" value="RIBOSOMALS12"/>
</dbReference>
<dbReference type="SUPFAM" id="SSF50249">
    <property type="entry name" value="Nucleic acid-binding proteins"/>
    <property type="match status" value="1"/>
</dbReference>
<dbReference type="PROSITE" id="PS00055">
    <property type="entry name" value="RIBOSOMAL_S12"/>
    <property type="match status" value="1"/>
</dbReference>
<evidence type="ECO:0000250" key="1"/>
<evidence type="ECO:0000255" key="2">
    <source>
        <dbReference type="HAMAP-Rule" id="MF_00403"/>
    </source>
</evidence>
<evidence type="ECO:0000305" key="3"/>
<organism>
    <name type="scientific">Shewanella loihica (strain ATCC BAA-1088 / PV-4)</name>
    <dbReference type="NCBI Taxonomy" id="323850"/>
    <lineage>
        <taxon>Bacteria</taxon>
        <taxon>Pseudomonadati</taxon>
        <taxon>Pseudomonadota</taxon>
        <taxon>Gammaproteobacteria</taxon>
        <taxon>Alteromonadales</taxon>
        <taxon>Shewanellaceae</taxon>
        <taxon>Shewanella</taxon>
    </lineage>
</organism>
<proteinExistence type="inferred from homology"/>
<keyword id="KW-0488">Methylation</keyword>
<keyword id="KW-1185">Reference proteome</keyword>
<keyword id="KW-0687">Ribonucleoprotein</keyword>
<keyword id="KW-0689">Ribosomal protein</keyword>
<keyword id="KW-0694">RNA-binding</keyword>
<keyword id="KW-0699">rRNA-binding</keyword>
<keyword id="KW-0820">tRNA-binding</keyword>
<comment type="function">
    <text evidence="2">With S4 and S5 plays an important role in translational accuracy.</text>
</comment>
<comment type="function">
    <text evidence="2">Interacts with and stabilizes bases of the 16S rRNA that are involved in tRNA selection in the A site and with the mRNA backbone. Located at the interface of the 30S and 50S subunits, it traverses the body of the 30S subunit contacting proteins on the other side and probably holding the rRNA structure together. The combined cluster of proteins S8, S12 and S17 appears to hold together the shoulder and platform of the 30S subunit.</text>
</comment>
<comment type="subunit">
    <text evidence="2">Part of the 30S ribosomal subunit. Contacts proteins S8 and S17. May interact with IF1 in the 30S initiation complex.</text>
</comment>
<comment type="similarity">
    <text evidence="2">Belongs to the universal ribosomal protein uS12 family.</text>
</comment>